<proteinExistence type="inferred from homology"/>
<accession>A3CZU7</accession>
<dbReference type="EMBL" id="CP000563">
    <property type="protein sequence ID" value="ABN60010.1"/>
    <property type="molecule type" value="Genomic_DNA"/>
</dbReference>
<dbReference type="RefSeq" id="WP_006084265.1">
    <property type="nucleotide sequence ID" value="NC_009052.1"/>
</dbReference>
<dbReference type="SMR" id="A3CZU7"/>
<dbReference type="STRING" id="325240.Sbal_0480"/>
<dbReference type="GeneID" id="11773971"/>
<dbReference type="KEGG" id="sbl:Sbal_0480"/>
<dbReference type="HOGENOM" id="CLU_095787_0_0_6"/>
<dbReference type="OrthoDB" id="9810350at2"/>
<dbReference type="Proteomes" id="UP000001557">
    <property type="component" value="Chromosome"/>
</dbReference>
<dbReference type="GO" id="GO:0005886">
    <property type="term" value="C:plasma membrane"/>
    <property type="evidence" value="ECO:0007669"/>
    <property type="project" value="UniProtKB-SubCell"/>
</dbReference>
<dbReference type="GO" id="GO:0008381">
    <property type="term" value="F:mechanosensitive monoatomic ion channel activity"/>
    <property type="evidence" value="ECO:0007669"/>
    <property type="project" value="UniProtKB-UniRule"/>
</dbReference>
<dbReference type="FunFam" id="1.10.1200.120:FF:000001">
    <property type="entry name" value="Large-conductance mechanosensitive channel"/>
    <property type="match status" value="1"/>
</dbReference>
<dbReference type="Gene3D" id="1.10.1200.120">
    <property type="entry name" value="Large-conductance mechanosensitive channel, MscL, domain 1"/>
    <property type="match status" value="1"/>
</dbReference>
<dbReference type="HAMAP" id="MF_00115">
    <property type="entry name" value="MscL"/>
    <property type="match status" value="1"/>
</dbReference>
<dbReference type="InterPro" id="IPR019823">
    <property type="entry name" value="Mechanosensitive_channel_CS"/>
</dbReference>
<dbReference type="InterPro" id="IPR001185">
    <property type="entry name" value="MS_channel"/>
</dbReference>
<dbReference type="InterPro" id="IPR037673">
    <property type="entry name" value="MSC/AndL"/>
</dbReference>
<dbReference type="InterPro" id="IPR036019">
    <property type="entry name" value="MscL_channel"/>
</dbReference>
<dbReference type="NCBIfam" id="TIGR00220">
    <property type="entry name" value="mscL"/>
    <property type="match status" value="1"/>
</dbReference>
<dbReference type="NCBIfam" id="NF001843">
    <property type="entry name" value="PRK00567.1-4"/>
    <property type="match status" value="1"/>
</dbReference>
<dbReference type="PANTHER" id="PTHR30266:SF2">
    <property type="entry name" value="LARGE-CONDUCTANCE MECHANOSENSITIVE CHANNEL"/>
    <property type="match status" value="1"/>
</dbReference>
<dbReference type="PANTHER" id="PTHR30266">
    <property type="entry name" value="MECHANOSENSITIVE CHANNEL MSCL"/>
    <property type="match status" value="1"/>
</dbReference>
<dbReference type="Pfam" id="PF01741">
    <property type="entry name" value="MscL"/>
    <property type="match status" value="1"/>
</dbReference>
<dbReference type="PRINTS" id="PR01264">
    <property type="entry name" value="MECHCHANNEL"/>
</dbReference>
<dbReference type="SUPFAM" id="SSF81330">
    <property type="entry name" value="Gated mechanosensitive channel"/>
    <property type="match status" value="1"/>
</dbReference>
<dbReference type="PROSITE" id="PS01327">
    <property type="entry name" value="MSCL"/>
    <property type="match status" value="1"/>
</dbReference>
<sequence length="136" mass="14575">MSLIKEFKAFASRGNVIDMAVGIIIGAAFGKIVSSFVADIIMPPIGIILGGVNFSDLSIVLQAAQGDAPSVVIAYGKFIQTIIDFTIIAFAIFMGVKAINRLKRKEEVAPKAPAAPTKDQELLSEIRDLLKAQQEK</sequence>
<name>MSCL_SHEB5</name>
<evidence type="ECO:0000255" key="1">
    <source>
        <dbReference type="HAMAP-Rule" id="MF_00115"/>
    </source>
</evidence>
<keyword id="KW-0997">Cell inner membrane</keyword>
<keyword id="KW-1003">Cell membrane</keyword>
<keyword id="KW-0407">Ion channel</keyword>
<keyword id="KW-0406">Ion transport</keyword>
<keyword id="KW-0472">Membrane</keyword>
<keyword id="KW-1185">Reference proteome</keyword>
<keyword id="KW-0812">Transmembrane</keyword>
<keyword id="KW-1133">Transmembrane helix</keyword>
<keyword id="KW-0813">Transport</keyword>
<comment type="function">
    <text evidence="1">Channel that opens in response to stretch forces in the membrane lipid bilayer. May participate in the regulation of osmotic pressure changes within the cell.</text>
</comment>
<comment type="subunit">
    <text evidence="1">Homopentamer.</text>
</comment>
<comment type="subcellular location">
    <subcellularLocation>
        <location evidence="1">Cell inner membrane</location>
        <topology evidence="1">Multi-pass membrane protein</topology>
    </subcellularLocation>
</comment>
<comment type="similarity">
    <text evidence="1">Belongs to the MscL family.</text>
</comment>
<protein>
    <recommendedName>
        <fullName evidence="1">Large-conductance mechanosensitive channel</fullName>
    </recommendedName>
</protein>
<reference key="1">
    <citation type="submission" date="2007-02" db="EMBL/GenBank/DDBJ databases">
        <title>Complete sequence of chromosome of Shewanella baltica OS155.</title>
        <authorList>
            <consortium name="US DOE Joint Genome Institute"/>
            <person name="Copeland A."/>
            <person name="Lucas S."/>
            <person name="Lapidus A."/>
            <person name="Barry K."/>
            <person name="Detter J.C."/>
            <person name="Glavina del Rio T."/>
            <person name="Hammon N."/>
            <person name="Israni S."/>
            <person name="Dalin E."/>
            <person name="Tice H."/>
            <person name="Pitluck S."/>
            <person name="Sims D.R."/>
            <person name="Brettin T."/>
            <person name="Bruce D."/>
            <person name="Han C."/>
            <person name="Tapia R."/>
            <person name="Brainard J."/>
            <person name="Schmutz J."/>
            <person name="Larimer F."/>
            <person name="Land M."/>
            <person name="Hauser L."/>
            <person name="Kyrpides N."/>
            <person name="Mikhailova N."/>
            <person name="Brettar I."/>
            <person name="Klappenbach J."/>
            <person name="Konstantinidis K."/>
            <person name="Rodrigues J."/>
            <person name="Tiedje J."/>
            <person name="Richardson P."/>
        </authorList>
    </citation>
    <scope>NUCLEOTIDE SEQUENCE [LARGE SCALE GENOMIC DNA]</scope>
    <source>
        <strain>OS155 / ATCC BAA-1091</strain>
    </source>
</reference>
<feature type="chain" id="PRO_1000015423" description="Large-conductance mechanosensitive channel">
    <location>
        <begin position="1"/>
        <end position="136"/>
    </location>
</feature>
<feature type="transmembrane region" description="Helical" evidence="1">
    <location>
        <begin position="9"/>
        <end position="29"/>
    </location>
</feature>
<feature type="transmembrane region" description="Helical" evidence="1">
    <location>
        <begin position="79"/>
        <end position="99"/>
    </location>
</feature>
<gene>
    <name evidence="1" type="primary">mscL</name>
    <name type="ordered locus">Sbal_0480</name>
</gene>
<organism>
    <name type="scientific">Shewanella baltica (strain OS155 / ATCC BAA-1091)</name>
    <dbReference type="NCBI Taxonomy" id="325240"/>
    <lineage>
        <taxon>Bacteria</taxon>
        <taxon>Pseudomonadati</taxon>
        <taxon>Pseudomonadota</taxon>
        <taxon>Gammaproteobacteria</taxon>
        <taxon>Alteromonadales</taxon>
        <taxon>Shewanellaceae</taxon>
        <taxon>Shewanella</taxon>
    </lineage>
</organism>